<dbReference type="EMBL" id="CP000259">
    <property type="protein sequence ID" value="ABF31241.1"/>
    <property type="molecule type" value="Genomic_DNA"/>
</dbReference>
<dbReference type="RefSeq" id="WP_000440811.1">
    <property type="nucleotide sequence ID" value="NC_008021.1"/>
</dbReference>
<dbReference type="SMR" id="Q1JP08"/>
<dbReference type="GeneID" id="69900035"/>
<dbReference type="KEGG" id="spk:MGAS9429_Spy0053"/>
<dbReference type="HOGENOM" id="CLU_073626_1_0_9"/>
<dbReference type="Proteomes" id="UP000002433">
    <property type="component" value="Chromosome"/>
</dbReference>
<dbReference type="GO" id="GO:0022627">
    <property type="term" value="C:cytosolic small ribosomal subunit"/>
    <property type="evidence" value="ECO:0007669"/>
    <property type="project" value="TreeGrafter"/>
</dbReference>
<dbReference type="GO" id="GO:0019843">
    <property type="term" value="F:rRNA binding"/>
    <property type="evidence" value="ECO:0007669"/>
    <property type="project" value="UniProtKB-UniRule"/>
</dbReference>
<dbReference type="GO" id="GO:0003735">
    <property type="term" value="F:structural constituent of ribosome"/>
    <property type="evidence" value="ECO:0007669"/>
    <property type="project" value="InterPro"/>
</dbReference>
<dbReference type="GO" id="GO:0006412">
    <property type="term" value="P:translation"/>
    <property type="evidence" value="ECO:0007669"/>
    <property type="project" value="UniProtKB-UniRule"/>
</dbReference>
<dbReference type="CDD" id="cd00364">
    <property type="entry name" value="Ribosomal_uS17"/>
    <property type="match status" value="1"/>
</dbReference>
<dbReference type="FunFam" id="2.40.50.140:FF:000026">
    <property type="entry name" value="30S ribosomal protein S17"/>
    <property type="match status" value="1"/>
</dbReference>
<dbReference type="Gene3D" id="2.40.50.140">
    <property type="entry name" value="Nucleic acid-binding proteins"/>
    <property type="match status" value="1"/>
</dbReference>
<dbReference type="HAMAP" id="MF_01345_B">
    <property type="entry name" value="Ribosomal_uS17_B"/>
    <property type="match status" value="1"/>
</dbReference>
<dbReference type="InterPro" id="IPR012340">
    <property type="entry name" value="NA-bd_OB-fold"/>
</dbReference>
<dbReference type="InterPro" id="IPR000266">
    <property type="entry name" value="Ribosomal_uS17"/>
</dbReference>
<dbReference type="InterPro" id="IPR019984">
    <property type="entry name" value="Ribosomal_uS17_bact/chlr"/>
</dbReference>
<dbReference type="InterPro" id="IPR019979">
    <property type="entry name" value="Ribosomal_uS17_CS"/>
</dbReference>
<dbReference type="NCBIfam" id="NF004123">
    <property type="entry name" value="PRK05610.1"/>
    <property type="match status" value="1"/>
</dbReference>
<dbReference type="NCBIfam" id="TIGR03635">
    <property type="entry name" value="uS17_bact"/>
    <property type="match status" value="1"/>
</dbReference>
<dbReference type="PANTHER" id="PTHR10744">
    <property type="entry name" value="40S RIBOSOMAL PROTEIN S11 FAMILY MEMBER"/>
    <property type="match status" value="1"/>
</dbReference>
<dbReference type="PANTHER" id="PTHR10744:SF1">
    <property type="entry name" value="SMALL RIBOSOMAL SUBUNIT PROTEIN US17M"/>
    <property type="match status" value="1"/>
</dbReference>
<dbReference type="Pfam" id="PF00366">
    <property type="entry name" value="Ribosomal_S17"/>
    <property type="match status" value="1"/>
</dbReference>
<dbReference type="PRINTS" id="PR00973">
    <property type="entry name" value="RIBOSOMALS17"/>
</dbReference>
<dbReference type="SUPFAM" id="SSF50249">
    <property type="entry name" value="Nucleic acid-binding proteins"/>
    <property type="match status" value="1"/>
</dbReference>
<dbReference type="PROSITE" id="PS00056">
    <property type="entry name" value="RIBOSOMAL_S17"/>
    <property type="match status" value="1"/>
</dbReference>
<comment type="function">
    <text evidence="1">One of the primary rRNA binding proteins, it binds specifically to the 5'-end of 16S ribosomal RNA.</text>
</comment>
<comment type="subunit">
    <text evidence="1">Part of the 30S ribosomal subunit.</text>
</comment>
<comment type="similarity">
    <text evidence="1">Belongs to the universal ribosomal protein uS17 family.</text>
</comment>
<accession>Q1JP08</accession>
<keyword id="KW-0687">Ribonucleoprotein</keyword>
<keyword id="KW-0689">Ribosomal protein</keyword>
<keyword id="KW-0694">RNA-binding</keyword>
<keyword id="KW-0699">rRNA-binding</keyword>
<name>RS17_STRPC</name>
<organism>
    <name type="scientific">Streptococcus pyogenes serotype M12 (strain MGAS9429)</name>
    <dbReference type="NCBI Taxonomy" id="370551"/>
    <lineage>
        <taxon>Bacteria</taxon>
        <taxon>Bacillati</taxon>
        <taxon>Bacillota</taxon>
        <taxon>Bacilli</taxon>
        <taxon>Lactobacillales</taxon>
        <taxon>Streptococcaceae</taxon>
        <taxon>Streptococcus</taxon>
    </lineage>
</organism>
<reference key="1">
    <citation type="journal article" date="2006" name="Proc. Natl. Acad. Sci. U.S.A.">
        <title>Molecular genetic anatomy of inter- and intraserotype variation in the human bacterial pathogen group A Streptococcus.</title>
        <authorList>
            <person name="Beres S.B."/>
            <person name="Richter E.W."/>
            <person name="Nagiec M.J."/>
            <person name="Sumby P."/>
            <person name="Porcella S.F."/>
            <person name="DeLeo F.R."/>
            <person name="Musser J.M."/>
        </authorList>
    </citation>
    <scope>NUCLEOTIDE SEQUENCE [LARGE SCALE GENOMIC DNA]</scope>
    <source>
        <strain>MGAS9429</strain>
    </source>
</reference>
<feature type="chain" id="PRO_0000255705" description="Small ribosomal subunit protein uS17">
    <location>
        <begin position="1"/>
        <end position="86"/>
    </location>
</feature>
<proteinExistence type="inferred from homology"/>
<sequence length="86" mass="10090">MERNQRKTLYGRVVSDKMDKTITVVVETKRNHPVYGKRINYSKKYKAHDENNVAKEGDIVRIMETRPLSATKRFRLVEVVEKAVII</sequence>
<gene>
    <name evidence="1" type="primary">rpsQ</name>
    <name type="ordered locus">MGAS9429_Spy0053</name>
</gene>
<evidence type="ECO:0000255" key="1">
    <source>
        <dbReference type="HAMAP-Rule" id="MF_01345"/>
    </source>
</evidence>
<evidence type="ECO:0000305" key="2"/>
<protein>
    <recommendedName>
        <fullName evidence="1">Small ribosomal subunit protein uS17</fullName>
    </recommendedName>
    <alternativeName>
        <fullName evidence="2">30S ribosomal protein S17</fullName>
    </alternativeName>
</protein>